<proteinExistence type="inferred from homology"/>
<accession>Q4ZMQ5</accession>
<dbReference type="EMBL" id="CP000075">
    <property type="protein sequence ID" value="AAY39567.1"/>
    <property type="molecule type" value="Genomic_DNA"/>
</dbReference>
<dbReference type="RefSeq" id="WP_003317102.1">
    <property type="nucleotide sequence ID" value="NC_007005.1"/>
</dbReference>
<dbReference type="RefSeq" id="YP_237605.1">
    <property type="nucleotide sequence ID" value="NC_007005.1"/>
</dbReference>
<dbReference type="SMR" id="Q4ZMQ5"/>
<dbReference type="STRING" id="205918.Psyr_4537"/>
<dbReference type="GeneID" id="77280363"/>
<dbReference type="KEGG" id="psb:Psyr_4537"/>
<dbReference type="PATRIC" id="fig|205918.7.peg.4676"/>
<dbReference type="eggNOG" id="COG0198">
    <property type="taxonomic scope" value="Bacteria"/>
</dbReference>
<dbReference type="HOGENOM" id="CLU_093315_2_2_6"/>
<dbReference type="OrthoDB" id="9807419at2"/>
<dbReference type="Proteomes" id="UP000000426">
    <property type="component" value="Chromosome"/>
</dbReference>
<dbReference type="GO" id="GO:1990904">
    <property type="term" value="C:ribonucleoprotein complex"/>
    <property type="evidence" value="ECO:0007669"/>
    <property type="project" value="UniProtKB-KW"/>
</dbReference>
<dbReference type="GO" id="GO:0005840">
    <property type="term" value="C:ribosome"/>
    <property type="evidence" value="ECO:0007669"/>
    <property type="project" value="UniProtKB-KW"/>
</dbReference>
<dbReference type="GO" id="GO:0019843">
    <property type="term" value="F:rRNA binding"/>
    <property type="evidence" value="ECO:0007669"/>
    <property type="project" value="UniProtKB-UniRule"/>
</dbReference>
<dbReference type="GO" id="GO:0003735">
    <property type="term" value="F:structural constituent of ribosome"/>
    <property type="evidence" value="ECO:0007669"/>
    <property type="project" value="InterPro"/>
</dbReference>
<dbReference type="GO" id="GO:0006412">
    <property type="term" value="P:translation"/>
    <property type="evidence" value="ECO:0007669"/>
    <property type="project" value="UniProtKB-UniRule"/>
</dbReference>
<dbReference type="CDD" id="cd06089">
    <property type="entry name" value="KOW_RPL26"/>
    <property type="match status" value="1"/>
</dbReference>
<dbReference type="FunFam" id="2.30.30.30:FF:000004">
    <property type="entry name" value="50S ribosomal protein L24"/>
    <property type="match status" value="1"/>
</dbReference>
<dbReference type="Gene3D" id="2.30.30.30">
    <property type="match status" value="1"/>
</dbReference>
<dbReference type="HAMAP" id="MF_01326_B">
    <property type="entry name" value="Ribosomal_uL24_B"/>
    <property type="match status" value="1"/>
</dbReference>
<dbReference type="InterPro" id="IPR005824">
    <property type="entry name" value="KOW"/>
</dbReference>
<dbReference type="InterPro" id="IPR014722">
    <property type="entry name" value="Rib_uL2_dom2"/>
</dbReference>
<dbReference type="InterPro" id="IPR003256">
    <property type="entry name" value="Ribosomal_uL24"/>
</dbReference>
<dbReference type="InterPro" id="IPR005825">
    <property type="entry name" value="Ribosomal_uL24_CS"/>
</dbReference>
<dbReference type="InterPro" id="IPR041988">
    <property type="entry name" value="Ribosomal_uL24_KOW"/>
</dbReference>
<dbReference type="InterPro" id="IPR008991">
    <property type="entry name" value="Translation_prot_SH3-like_sf"/>
</dbReference>
<dbReference type="NCBIfam" id="TIGR01079">
    <property type="entry name" value="rplX_bact"/>
    <property type="match status" value="1"/>
</dbReference>
<dbReference type="PANTHER" id="PTHR12903">
    <property type="entry name" value="MITOCHONDRIAL RIBOSOMAL PROTEIN L24"/>
    <property type="match status" value="1"/>
</dbReference>
<dbReference type="Pfam" id="PF00467">
    <property type="entry name" value="KOW"/>
    <property type="match status" value="1"/>
</dbReference>
<dbReference type="Pfam" id="PF17136">
    <property type="entry name" value="ribosomal_L24"/>
    <property type="match status" value="1"/>
</dbReference>
<dbReference type="SMART" id="SM00739">
    <property type="entry name" value="KOW"/>
    <property type="match status" value="1"/>
</dbReference>
<dbReference type="SUPFAM" id="SSF50104">
    <property type="entry name" value="Translation proteins SH3-like domain"/>
    <property type="match status" value="1"/>
</dbReference>
<dbReference type="PROSITE" id="PS01108">
    <property type="entry name" value="RIBOSOMAL_L24"/>
    <property type="match status" value="1"/>
</dbReference>
<feature type="chain" id="PRO_0000241644" description="Large ribosomal subunit protein uL24">
    <location>
        <begin position="1"/>
        <end position="104"/>
    </location>
</feature>
<organism>
    <name type="scientific">Pseudomonas syringae pv. syringae (strain B728a)</name>
    <dbReference type="NCBI Taxonomy" id="205918"/>
    <lineage>
        <taxon>Bacteria</taxon>
        <taxon>Pseudomonadati</taxon>
        <taxon>Pseudomonadota</taxon>
        <taxon>Gammaproteobacteria</taxon>
        <taxon>Pseudomonadales</taxon>
        <taxon>Pseudomonadaceae</taxon>
        <taxon>Pseudomonas</taxon>
        <taxon>Pseudomonas syringae</taxon>
    </lineage>
</organism>
<comment type="function">
    <text evidence="1">One of two assembly initiator proteins, it binds directly to the 5'-end of the 23S rRNA, where it nucleates assembly of the 50S subunit.</text>
</comment>
<comment type="function">
    <text evidence="1">One of the proteins that surrounds the polypeptide exit tunnel on the outside of the subunit.</text>
</comment>
<comment type="subunit">
    <text evidence="1">Part of the 50S ribosomal subunit.</text>
</comment>
<comment type="similarity">
    <text evidence="1">Belongs to the universal ribosomal protein uL24 family.</text>
</comment>
<evidence type="ECO:0000255" key="1">
    <source>
        <dbReference type="HAMAP-Rule" id="MF_01326"/>
    </source>
</evidence>
<evidence type="ECO:0000305" key="2"/>
<sequence length="104" mass="11305">MQKIRRDDEIIVIAGKDKGKRGKVLKVLADDRLVVGGINLVKRHTKPNPMSGVQGGIVEKEAPMHASNVAIFNGATNKADRVGFKVEDGKKIRVFKSTQKAVDA</sequence>
<gene>
    <name evidence="1" type="primary">rplX</name>
    <name type="ordered locus">Psyr_4537</name>
</gene>
<protein>
    <recommendedName>
        <fullName evidence="1">Large ribosomal subunit protein uL24</fullName>
    </recommendedName>
    <alternativeName>
        <fullName evidence="2">50S ribosomal protein L24</fullName>
    </alternativeName>
</protein>
<reference key="1">
    <citation type="journal article" date="2005" name="Proc. Natl. Acad. Sci. U.S.A.">
        <title>Comparison of the complete genome sequences of Pseudomonas syringae pv. syringae B728a and pv. tomato DC3000.</title>
        <authorList>
            <person name="Feil H."/>
            <person name="Feil W.S."/>
            <person name="Chain P."/>
            <person name="Larimer F."/>
            <person name="Dibartolo G."/>
            <person name="Copeland A."/>
            <person name="Lykidis A."/>
            <person name="Trong S."/>
            <person name="Nolan M."/>
            <person name="Goltsman E."/>
            <person name="Thiel J."/>
            <person name="Malfatti S."/>
            <person name="Loper J.E."/>
            <person name="Lapidus A."/>
            <person name="Detter J.C."/>
            <person name="Land M."/>
            <person name="Richardson P.M."/>
            <person name="Kyrpides N.C."/>
            <person name="Ivanova N."/>
            <person name="Lindow S.E."/>
        </authorList>
    </citation>
    <scope>NUCLEOTIDE SEQUENCE [LARGE SCALE GENOMIC DNA]</scope>
    <source>
        <strain>B728a</strain>
    </source>
</reference>
<name>RL24_PSEU2</name>
<keyword id="KW-0687">Ribonucleoprotein</keyword>
<keyword id="KW-0689">Ribosomal protein</keyword>
<keyword id="KW-0694">RNA-binding</keyword>
<keyword id="KW-0699">rRNA-binding</keyword>